<comment type="function">
    <text evidence="1">One of the components of the core complex of photosystem II (PSII). PSII is a light-driven water:plastoquinone oxidoreductase that uses light energy to abstract electrons from H(2)O, generating O(2) and a proton gradient subsequently used for ATP formation. It consists of a core antenna complex that captures photons, and an electron transfer chain that converts photonic excitation into a charge separation.</text>
</comment>
<comment type="subunit">
    <text evidence="1">PSII is composed of 1 copy each of membrane proteins PsbA, PsbB, PsbC, PsbD, PsbE, PsbF, PsbH, PsbI, PsbJ, PsbK, PsbL, PsbM, PsbT, PsbX, PsbY, PsbZ, Psb30/Ycf12, at least 3 peripheral proteins of the oxygen-evolving complex and a large number of cofactors. It forms dimeric complexes.</text>
</comment>
<comment type="subcellular location">
    <subcellularLocation>
        <location evidence="1">Plastid</location>
        <location evidence="1">Chloroplast thylakoid membrane</location>
        <topology evidence="1">Single-pass membrane protein</topology>
    </subcellularLocation>
</comment>
<comment type="similarity">
    <text evidence="1">Belongs to the PsbK family.</text>
</comment>
<organism>
    <name type="scientific">Adiantum capillus-veneris</name>
    <name type="common">Maidenhair fern</name>
    <dbReference type="NCBI Taxonomy" id="13818"/>
    <lineage>
        <taxon>Eukaryota</taxon>
        <taxon>Viridiplantae</taxon>
        <taxon>Streptophyta</taxon>
        <taxon>Embryophyta</taxon>
        <taxon>Tracheophyta</taxon>
        <taxon>Polypodiopsida</taxon>
        <taxon>Polypodiidae</taxon>
        <taxon>Polypodiales</taxon>
        <taxon>Pteridineae</taxon>
        <taxon>Pteridaceae</taxon>
        <taxon>Vittarioideae</taxon>
        <taxon>Adiantum</taxon>
    </lineage>
</organism>
<protein>
    <recommendedName>
        <fullName evidence="1">Photosystem II reaction center protein K</fullName>
        <shortName evidence="1">PSII-K</shortName>
    </recommendedName>
</protein>
<keyword id="KW-0150">Chloroplast</keyword>
<keyword id="KW-0472">Membrane</keyword>
<keyword id="KW-0602">Photosynthesis</keyword>
<keyword id="KW-0604">Photosystem II</keyword>
<keyword id="KW-0934">Plastid</keyword>
<keyword id="KW-0674">Reaction center</keyword>
<keyword id="KW-0793">Thylakoid</keyword>
<keyword id="KW-0812">Transmembrane</keyword>
<keyword id="KW-1133">Transmembrane helix</keyword>
<accession>Q85FN7</accession>
<sequence>MTVSYSIYLENSLHFGDALLAKLPEAYAIFDPIVDVMPVIPVFFLLLAFVWQAAVSFR</sequence>
<gene>
    <name evidence="1" type="primary">psbK</name>
</gene>
<name>PSBK_ADICA</name>
<evidence type="ECO:0000255" key="1">
    <source>
        <dbReference type="HAMAP-Rule" id="MF_00441"/>
    </source>
</evidence>
<reference key="1">
    <citation type="journal article" date="2003" name="DNA Res.">
        <title>Complete nucleotide sequence of the chloroplast genome from a leptosporangiate fern, Adiantum capillus-veneris L.</title>
        <authorList>
            <person name="Wolf P.G."/>
            <person name="Rowe C.A."/>
            <person name="Sinclair R.B."/>
            <person name="Hasebe M."/>
        </authorList>
    </citation>
    <scope>NUCLEOTIDE SEQUENCE [LARGE SCALE GENOMIC DNA]</scope>
</reference>
<reference key="2">
    <citation type="journal article" date="2004" name="Gene">
        <title>High levels of RNA editing in a vascular plant chloroplast genome: analysis of transcripts from the fern Adiantum capillus-veneris.</title>
        <authorList>
            <person name="Wolf P.G."/>
            <person name="Rowe C.A."/>
            <person name="Hasebe M."/>
        </authorList>
    </citation>
    <scope>NUCLEOTIDE SEQUENCE [GENOMIC DNA]</scope>
    <scope>ABSENCE OF RNA EDITING</scope>
    <source>
        <tissue>Frond</tissue>
    </source>
</reference>
<proteinExistence type="evidence at transcript level"/>
<feature type="propeptide" id="PRO_0000029433" evidence="1">
    <location>
        <begin position="1"/>
        <end position="21"/>
    </location>
</feature>
<feature type="chain" id="PRO_0000029434" description="Photosystem II reaction center protein K" evidence="1">
    <location>
        <begin position="22"/>
        <end position="58"/>
    </location>
</feature>
<feature type="transmembrane region" description="Helical" evidence="1">
    <location>
        <begin position="29"/>
        <end position="49"/>
    </location>
</feature>
<dbReference type="EMBL" id="AY178864">
    <property type="protein sequence ID" value="AAP29374.1"/>
    <property type="molecule type" value="Genomic_DNA"/>
</dbReference>
<dbReference type="RefSeq" id="NP_848042.1">
    <property type="nucleotide sequence ID" value="NC_004766.1"/>
</dbReference>
<dbReference type="SMR" id="Q85FN7"/>
<dbReference type="GeneID" id="807378"/>
<dbReference type="GO" id="GO:0009535">
    <property type="term" value="C:chloroplast thylakoid membrane"/>
    <property type="evidence" value="ECO:0007669"/>
    <property type="project" value="UniProtKB-SubCell"/>
</dbReference>
<dbReference type="GO" id="GO:0009539">
    <property type="term" value="C:photosystem II reaction center"/>
    <property type="evidence" value="ECO:0007669"/>
    <property type="project" value="InterPro"/>
</dbReference>
<dbReference type="GO" id="GO:0015979">
    <property type="term" value="P:photosynthesis"/>
    <property type="evidence" value="ECO:0007669"/>
    <property type="project" value="UniProtKB-UniRule"/>
</dbReference>
<dbReference type="HAMAP" id="MF_00441">
    <property type="entry name" value="PSII_PsbK"/>
    <property type="match status" value="1"/>
</dbReference>
<dbReference type="InterPro" id="IPR003687">
    <property type="entry name" value="PSII_PsbK"/>
</dbReference>
<dbReference type="InterPro" id="IPR037270">
    <property type="entry name" value="PSII_PsbK_sf"/>
</dbReference>
<dbReference type="NCBIfam" id="NF002715">
    <property type="entry name" value="PRK02553.1"/>
    <property type="match status" value="1"/>
</dbReference>
<dbReference type="PANTHER" id="PTHR35325">
    <property type="match status" value="1"/>
</dbReference>
<dbReference type="PANTHER" id="PTHR35325:SF1">
    <property type="entry name" value="PHOTOSYSTEM II REACTION CENTER PROTEIN K"/>
    <property type="match status" value="1"/>
</dbReference>
<dbReference type="Pfam" id="PF02533">
    <property type="entry name" value="PsbK"/>
    <property type="match status" value="1"/>
</dbReference>
<dbReference type="SUPFAM" id="SSF161037">
    <property type="entry name" value="Photosystem II reaction center protein K, PsbK"/>
    <property type="match status" value="1"/>
</dbReference>
<geneLocation type="chloroplast"/>